<comment type="function">
    <text evidence="1">NDH-1 shuttles electrons from NADH, via FMN and iron-sulfur (Fe-S) centers, to quinones in the respiratory chain. The immediate electron acceptor for the enzyme in this species is believed to be ubiquinone. Couples the redox reaction to proton translocation (for every two electrons transferred, four hydrogen ions are translocated across the cytoplasmic membrane), and thus conserves the redox energy in a proton gradient.</text>
</comment>
<comment type="catalytic activity">
    <reaction evidence="1">
        <text>a quinone + NADH + 5 H(+)(in) = a quinol + NAD(+) + 4 H(+)(out)</text>
        <dbReference type="Rhea" id="RHEA:57888"/>
        <dbReference type="ChEBI" id="CHEBI:15378"/>
        <dbReference type="ChEBI" id="CHEBI:24646"/>
        <dbReference type="ChEBI" id="CHEBI:57540"/>
        <dbReference type="ChEBI" id="CHEBI:57945"/>
        <dbReference type="ChEBI" id="CHEBI:132124"/>
    </reaction>
</comment>
<comment type="subunit">
    <text evidence="1">NDH-1 is composed of 13 different subunits. Subunits NuoB, CD, E, F, and G constitute the peripheral sector of the complex.</text>
</comment>
<comment type="subcellular location">
    <subcellularLocation>
        <location evidence="1">Cell inner membrane</location>
        <topology evidence="1">Peripheral membrane protein</topology>
        <orientation evidence="1">Cytoplasmic side</orientation>
    </subcellularLocation>
</comment>
<comment type="similarity">
    <text evidence="1">In the N-terminal section; belongs to the complex I 30 kDa subunit family.</text>
</comment>
<comment type="similarity">
    <text evidence="1">In the C-terminal section; belongs to the complex I 49 kDa subunit family.</text>
</comment>
<protein>
    <recommendedName>
        <fullName evidence="1">NADH-quinone oxidoreductase subunit C/D</fullName>
        <ecNumber evidence="1">7.1.1.-</ecNumber>
    </recommendedName>
    <alternativeName>
        <fullName evidence="1">NADH dehydrogenase I subunit C/D</fullName>
    </alternativeName>
    <alternativeName>
        <fullName evidence="1">NDH-1 subunit C/D</fullName>
    </alternativeName>
</protein>
<sequence>MSAASSLAPQRYMQDMGGASNASDVLEELKNRFGPPGTDNPGGPMGVVQKTGDDLPTQWVSRNRVHEVLHYLKLKAERPYRMLYDLTAIDERTRVHREDQPASRFTVIYHLLSFERNADVCLKVALTDTDLRMPTITDIWPAANWYEREIWDMFGIVFDGHPHLRRILLPPWWQGHALRKDHPARATEMEPFHLSTEKEEAEQETLRFHPEEWGMRRTHDGTDFMFLNLGPNHPSVHGVFRIVLQLDGEEIIDAVPEIGFHHRGAEKMGERQSWHTYIPYTDRIDYLGGVMNNLPYVLAVEKLAGIEVPDRVKVMRVMMAEFFRIASHLVFYGTFTQDLGALSPVFFMFTDRERVFDVVEAICGGRMHPSWYRIGGVAQDLPNGWDRMVRDFLDYMPARLDEYDKIAVGNRILKARTRGVGGYSIDEAIEWGVTGPNLRACGFEWDFRKARPYSGYDQFEFDVPTGQHGDCYDRCAVRVQEIRQSLRIIDQCLENMPAGAHKADHPLTTPPLKKHTLHDIETLIDHFLGVSWGPVIPPGEAFVGIEATKGNNGYYLISDGNTTAYRVRIRTPSFPHLQMIPLISRGLMISDLIAILGSIDFVMADVDR</sequence>
<reference key="1">
    <citation type="submission" date="2005-08" db="EMBL/GenBank/DDBJ databases">
        <title>Complete sequence of chromosome 1 of Nitrosospira multiformis ATCC 25196.</title>
        <authorList>
            <person name="Copeland A."/>
            <person name="Lucas S."/>
            <person name="Lapidus A."/>
            <person name="Barry K."/>
            <person name="Detter J.C."/>
            <person name="Glavina T."/>
            <person name="Hammon N."/>
            <person name="Israni S."/>
            <person name="Pitluck S."/>
            <person name="Chain P."/>
            <person name="Malfatti S."/>
            <person name="Shin M."/>
            <person name="Vergez L."/>
            <person name="Schmutz J."/>
            <person name="Larimer F."/>
            <person name="Land M."/>
            <person name="Hauser L."/>
            <person name="Kyrpides N."/>
            <person name="Lykidis A."/>
            <person name="Richardson P."/>
        </authorList>
    </citation>
    <scope>NUCLEOTIDE SEQUENCE [LARGE SCALE GENOMIC DNA]</scope>
    <source>
        <strain>ATCC 25196 / NCIMB 11849 / C 71</strain>
    </source>
</reference>
<keyword id="KW-0997">Cell inner membrane</keyword>
<keyword id="KW-1003">Cell membrane</keyword>
<keyword id="KW-0472">Membrane</keyword>
<keyword id="KW-0511">Multifunctional enzyme</keyword>
<keyword id="KW-0520">NAD</keyword>
<keyword id="KW-0874">Quinone</keyword>
<keyword id="KW-1185">Reference proteome</keyword>
<keyword id="KW-1278">Translocase</keyword>
<keyword id="KW-0813">Transport</keyword>
<keyword id="KW-0830">Ubiquinone</keyword>
<gene>
    <name evidence="1" type="primary">nuoC</name>
    <name evidence="1" type="synonym">nuoCD</name>
    <name evidence="1" type="synonym">nuoD</name>
    <name type="ordered locus">Nmul_A1015</name>
</gene>
<dbReference type="EC" id="7.1.1.-" evidence="1"/>
<dbReference type="EMBL" id="CP000103">
    <property type="protein sequence ID" value="ABB74318.1"/>
    <property type="molecule type" value="Genomic_DNA"/>
</dbReference>
<dbReference type="RefSeq" id="WP_011380363.1">
    <property type="nucleotide sequence ID" value="NC_007614.1"/>
</dbReference>
<dbReference type="SMR" id="Q2YAA3"/>
<dbReference type="STRING" id="323848.Nmul_A1015"/>
<dbReference type="KEGG" id="nmu:Nmul_A1015"/>
<dbReference type="eggNOG" id="COG0649">
    <property type="taxonomic scope" value="Bacteria"/>
</dbReference>
<dbReference type="eggNOG" id="COG0852">
    <property type="taxonomic scope" value="Bacteria"/>
</dbReference>
<dbReference type="HOGENOM" id="CLU_015134_3_2_4"/>
<dbReference type="Proteomes" id="UP000002718">
    <property type="component" value="Chromosome"/>
</dbReference>
<dbReference type="GO" id="GO:0030964">
    <property type="term" value="C:NADH dehydrogenase complex"/>
    <property type="evidence" value="ECO:0007669"/>
    <property type="project" value="InterPro"/>
</dbReference>
<dbReference type="GO" id="GO:0005886">
    <property type="term" value="C:plasma membrane"/>
    <property type="evidence" value="ECO:0007669"/>
    <property type="project" value="UniProtKB-SubCell"/>
</dbReference>
<dbReference type="GO" id="GO:0051287">
    <property type="term" value="F:NAD binding"/>
    <property type="evidence" value="ECO:0007669"/>
    <property type="project" value="InterPro"/>
</dbReference>
<dbReference type="GO" id="GO:0008137">
    <property type="term" value="F:NADH dehydrogenase (ubiquinone) activity"/>
    <property type="evidence" value="ECO:0007669"/>
    <property type="project" value="InterPro"/>
</dbReference>
<dbReference type="GO" id="GO:0050136">
    <property type="term" value="F:NADH:ubiquinone reductase (non-electrogenic) activity"/>
    <property type="evidence" value="ECO:0007669"/>
    <property type="project" value="UniProtKB-UniRule"/>
</dbReference>
<dbReference type="GO" id="GO:0048038">
    <property type="term" value="F:quinone binding"/>
    <property type="evidence" value="ECO:0007669"/>
    <property type="project" value="UniProtKB-KW"/>
</dbReference>
<dbReference type="FunFam" id="1.10.645.10:FF:000001">
    <property type="entry name" value="NADH-quinone oxidoreductase subunit C/D"/>
    <property type="match status" value="1"/>
</dbReference>
<dbReference type="Gene3D" id="1.10.645.10">
    <property type="entry name" value="Cytochrome-c3 Hydrogenase, chain B"/>
    <property type="match status" value="1"/>
</dbReference>
<dbReference type="Gene3D" id="3.30.460.80">
    <property type="entry name" value="NADH:ubiquinone oxidoreductase, 30kDa subunit"/>
    <property type="match status" value="1"/>
</dbReference>
<dbReference type="HAMAP" id="MF_01357">
    <property type="entry name" value="NDH1_NuoC"/>
    <property type="match status" value="1"/>
</dbReference>
<dbReference type="HAMAP" id="MF_01359">
    <property type="entry name" value="NDH1_NuoCD_1"/>
    <property type="match status" value="1"/>
</dbReference>
<dbReference type="HAMAP" id="MF_01358">
    <property type="entry name" value="NDH1_NuoD"/>
    <property type="match status" value="1"/>
</dbReference>
<dbReference type="InterPro" id="IPR010218">
    <property type="entry name" value="NADH_DH_suC"/>
</dbReference>
<dbReference type="InterPro" id="IPR023062">
    <property type="entry name" value="NADH_DH_suCD"/>
</dbReference>
<dbReference type="InterPro" id="IPR001135">
    <property type="entry name" value="NADH_Q_OxRdtase_suD"/>
</dbReference>
<dbReference type="InterPro" id="IPR037232">
    <property type="entry name" value="NADH_quin_OxRdtase_su_C/D-like"/>
</dbReference>
<dbReference type="InterPro" id="IPR001268">
    <property type="entry name" value="NADH_UbQ_OxRdtase_30kDa_su"/>
</dbReference>
<dbReference type="InterPro" id="IPR014029">
    <property type="entry name" value="NADH_UbQ_OxRdtase_49kDa_CS"/>
</dbReference>
<dbReference type="InterPro" id="IPR020396">
    <property type="entry name" value="NADH_UbQ_OxRdtase_CS"/>
</dbReference>
<dbReference type="InterPro" id="IPR022885">
    <property type="entry name" value="NDH1_su_D/H"/>
</dbReference>
<dbReference type="InterPro" id="IPR029014">
    <property type="entry name" value="NiFe-Hase_large"/>
</dbReference>
<dbReference type="NCBIfam" id="TIGR01961">
    <property type="entry name" value="NuoC_fam"/>
    <property type="match status" value="1"/>
</dbReference>
<dbReference type="NCBIfam" id="TIGR01962">
    <property type="entry name" value="NuoD"/>
    <property type="match status" value="1"/>
</dbReference>
<dbReference type="NCBIfam" id="NF004739">
    <property type="entry name" value="PRK06075.1"/>
    <property type="match status" value="1"/>
</dbReference>
<dbReference type="NCBIfam" id="NF008728">
    <property type="entry name" value="PRK11742.1"/>
    <property type="match status" value="1"/>
</dbReference>
<dbReference type="PANTHER" id="PTHR11993:SF45">
    <property type="entry name" value="NADH-QUINONE OXIDOREDUCTASE SUBUNIT C_D"/>
    <property type="match status" value="1"/>
</dbReference>
<dbReference type="PANTHER" id="PTHR11993">
    <property type="entry name" value="NADH-UBIQUINONE OXIDOREDUCTASE 49 KDA SUBUNIT"/>
    <property type="match status" value="1"/>
</dbReference>
<dbReference type="Pfam" id="PF00329">
    <property type="entry name" value="Complex1_30kDa"/>
    <property type="match status" value="1"/>
</dbReference>
<dbReference type="Pfam" id="PF00346">
    <property type="entry name" value="Complex1_49kDa"/>
    <property type="match status" value="1"/>
</dbReference>
<dbReference type="SUPFAM" id="SSF56762">
    <property type="entry name" value="HydB/Nqo4-like"/>
    <property type="match status" value="1"/>
</dbReference>
<dbReference type="SUPFAM" id="SSF143243">
    <property type="entry name" value="Nqo5-like"/>
    <property type="match status" value="1"/>
</dbReference>
<dbReference type="PROSITE" id="PS00542">
    <property type="entry name" value="COMPLEX1_30K"/>
    <property type="match status" value="1"/>
</dbReference>
<dbReference type="PROSITE" id="PS00535">
    <property type="entry name" value="COMPLEX1_49K"/>
    <property type="match status" value="1"/>
</dbReference>
<organism>
    <name type="scientific">Nitrosospira multiformis (strain ATCC 25196 / NCIMB 11849 / C 71)</name>
    <dbReference type="NCBI Taxonomy" id="323848"/>
    <lineage>
        <taxon>Bacteria</taxon>
        <taxon>Pseudomonadati</taxon>
        <taxon>Pseudomonadota</taxon>
        <taxon>Betaproteobacteria</taxon>
        <taxon>Nitrosomonadales</taxon>
        <taxon>Nitrosomonadaceae</taxon>
        <taxon>Nitrosospira</taxon>
    </lineage>
</organism>
<accession>Q2YAA3</accession>
<name>NUOCD_NITMU</name>
<proteinExistence type="inferred from homology"/>
<evidence type="ECO:0000255" key="1">
    <source>
        <dbReference type="HAMAP-Rule" id="MF_01359"/>
    </source>
</evidence>
<feature type="chain" id="PRO_0000358651" description="NADH-quinone oxidoreductase subunit C/D">
    <location>
        <begin position="1"/>
        <end position="608"/>
    </location>
</feature>
<feature type="region of interest" description="NADH dehydrogenase I subunit C" evidence="1">
    <location>
        <begin position="1"/>
        <end position="199"/>
    </location>
</feature>
<feature type="region of interest" description="NADH dehydrogenase I subunit D" evidence="1">
    <location>
        <begin position="223"/>
        <end position="608"/>
    </location>
</feature>